<comment type="function">
    <text evidence="1">Catalyzes the reversible conversion of 2-phosphoglycerate (2-PG) into phosphoenolpyruvate (PEP). It is essential for the degradation of carbohydrates via glycolysis.</text>
</comment>
<comment type="catalytic activity">
    <reaction evidence="1">
        <text>(2R)-2-phosphoglycerate = phosphoenolpyruvate + H2O</text>
        <dbReference type="Rhea" id="RHEA:10164"/>
        <dbReference type="ChEBI" id="CHEBI:15377"/>
        <dbReference type="ChEBI" id="CHEBI:58289"/>
        <dbReference type="ChEBI" id="CHEBI:58702"/>
        <dbReference type="EC" id="4.2.1.11"/>
    </reaction>
</comment>
<comment type="cofactor">
    <cofactor evidence="1">
        <name>Mg(2+)</name>
        <dbReference type="ChEBI" id="CHEBI:18420"/>
    </cofactor>
    <text evidence="1">Binds a second Mg(2+) ion via substrate during catalysis.</text>
</comment>
<comment type="pathway">
    <text evidence="1">Carbohydrate degradation; glycolysis; pyruvate from D-glyceraldehyde 3-phosphate: step 4/5.</text>
</comment>
<comment type="subcellular location">
    <subcellularLocation>
        <location evidence="1">Cytoplasm</location>
    </subcellularLocation>
    <subcellularLocation>
        <location evidence="1">Secreted</location>
    </subcellularLocation>
    <subcellularLocation>
        <location evidence="1">Cell surface</location>
    </subcellularLocation>
    <text evidence="1">Fractions of enolase are present in both the cytoplasm and on the cell surface.</text>
</comment>
<comment type="similarity">
    <text evidence="1">Belongs to the enolase family.</text>
</comment>
<sequence length="430" mass="46835">MENPYEIVGVVAREILDSRGNPTVEVDVYTHVGMGRAAVPSGASTGTHEALELRDGGKRYHGKGVRRAVENVNKIIAPELIGMDVRWQREIDALLLELDGTENKSNVGANAILAVSLAVAKAAANSLELPLYQYLGGVNAYVLPVPLSNVINGGVHAGNDLDFQEFMIMPIGADSFREAIRWVSETYHVLKKVIMEKYGKNAVNVGDEGGFAPPMKEVTEPLDVLIKAIEEAGYKPGDEIALALDVASSELFNEETGKYVVGGKEYDRGELLELYKDLTSTYPIVSIEDPFHEEDWEGFVMITKELGHKVQIVGDDLFVTNPKRLRKGIELGAANALLLKVNQIGTLSEAMDAAFTAFRAGYGVIVSHRSGETEDATIADLAVALNAGQIKTGAPARSDRNAKYNQLIRIEEELEGVAVYAGKRFRKVFF</sequence>
<gene>
    <name evidence="1" type="primary">eno</name>
    <name type="ordered locus">PF0215</name>
</gene>
<reference key="1">
    <citation type="journal article" date="1999" name="Genetics">
        <title>Divergence of the hyperthermophilic archaea Pyrococcus furiosus and P. horikoshii inferred from complete genomic sequences.</title>
        <authorList>
            <person name="Maeder D.L."/>
            <person name="Weiss R.B."/>
            <person name="Dunn D.M."/>
            <person name="Cherry J.L."/>
            <person name="Gonzalez J.M."/>
            <person name="DiRuggiero J."/>
            <person name="Robb F.T."/>
        </authorList>
    </citation>
    <scope>NUCLEOTIDE SEQUENCE [LARGE SCALE GENOMIC DNA]</scope>
    <source>
        <strain>ATCC 43587 / DSM 3638 / JCM 8422 / Vc1</strain>
    </source>
</reference>
<protein>
    <recommendedName>
        <fullName evidence="1">Enolase</fullName>
        <ecNumber evidence="1">4.2.1.11</ecNumber>
    </recommendedName>
    <alternativeName>
        <fullName evidence="1">2-phospho-D-glycerate hydro-lyase</fullName>
    </alternativeName>
    <alternativeName>
        <fullName evidence="1">2-phosphoglycerate dehydratase</fullName>
    </alternativeName>
</protein>
<proteinExistence type="inferred from homology"/>
<keyword id="KW-0963">Cytoplasm</keyword>
<keyword id="KW-0324">Glycolysis</keyword>
<keyword id="KW-0456">Lyase</keyword>
<keyword id="KW-0460">Magnesium</keyword>
<keyword id="KW-0479">Metal-binding</keyword>
<keyword id="KW-1185">Reference proteome</keyword>
<keyword id="KW-0964">Secreted</keyword>
<accession>Q8U477</accession>
<name>ENO_PYRFU</name>
<feature type="chain" id="PRO_0000134031" description="Enolase">
    <location>
        <begin position="1"/>
        <end position="430"/>
    </location>
</feature>
<feature type="active site" description="Proton donor" evidence="1">
    <location>
        <position position="208"/>
    </location>
</feature>
<feature type="active site" description="Proton acceptor" evidence="1">
    <location>
        <position position="340"/>
    </location>
</feature>
<feature type="binding site" evidence="1">
    <location>
        <position position="164"/>
    </location>
    <ligand>
        <name>(2R)-2-phosphoglycerate</name>
        <dbReference type="ChEBI" id="CHEBI:58289"/>
    </ligand>
</feature>
<feature type="binding site" evidence="1">
    <location>
        <position position="245"/>
    </location>
    <ligand>
        <name>Mg(2+)</name>
        <dbReference type="ChEBI" id="CHEBI:18420"/>
    </ligand>
</feature>
<feature type="binding site" evidence="1">
    <location>
        <position position="288"/>
    </location>
    <ligand>
        <name>Mg(2+)</name>
        <dbReference type="ChEBI" id="CHEBI:18420"/>
    </ligand>
</feature>
<feature type="binding site" evidence="1">
    <location>
        <position position="315"/>
    </location>
    <ligand>
        <name>Mg(2+)</name>
        <dbReference type="ChEBI" id="CHEBI:18420"/>
    </ligand>
</feature>
<feature type="binding site" evidence="1">
    <location>
        <position position="340"/>
    </location>
    <ligand>
        <name>(2R)-2-phosphoglycerate</name>
        <dbReference type="ChEBI" id="CHEBI:58289"/>
    </ligand>
</feature>
<feature type="binding site" evidence="1">
    <location>
        <position position="369"/>
    </location>
    <ligand>
        <name>(2R)-2-phosphoglycerate</name>
        <dbReference type="ChEBI" id="CHEBI:58289"/>
    </ligand>
</feature>
<feature type="binding site" evidence="1">
    <location>
        <position position="370"/>
    </location>
    <ligand>
        <name>(2R)-2-phosphoglycerate</name>
        <dbReference type="ChEBI" id="CHEBI:58289"/>
    </ligand>
</feature>
<feature type="binding site" evidence="1">
    <location>
        <position position="391"/>
    </location>
    <ligand>
        <name>(2R)-2-phosphoglycerate</name>
        <dbReference type="ChEBI" id="CHEBI:58289"/>
    </ligand>
</feature>
<organism>
    <name type="scientific">Pyrococcus furiosus (strain ATCC 43587 / DSM 3638 / JCM 8422 / Vc1)</name>
    <dbReference type="NCBI Taxonomy" id="186497"/>
    <lineage>
        <taxon>Archaea</taxon>
        <taxon>Methanobacteriati</taxon>
        <taxon>Methanobacteriota</taxon>
        <taxon>Thermococci</taxon>
        <taxon>Thermococcales</taxon>
        <taxon>Thermococcaceae</taxon>
        <taxon>Pyrococcus</taxon>
    </lineage>
</organism>
<dbReference type="EC" id="4.2.1.11" evidence="1"/>
<dbReference type="EMBL" id="AE009950">
    <property type="protein sequence ID" value="AAL80339.1"/>
    <property type="molecule type" value="Genomic_DNA"/>
</dbReference>
<dbReference type="RefSeq" id="WP_011011328.1">
    <property type="nucleotide sequence ID" value="NZ_CP023154.1"/>
</dbReference>
<dbReference type="SMR" id="Q8U477"/>
<dbReference type="STRING" id="186497.PF0215"/>
<dbReference type="PaxDb" id="186497-PF0215"/>
<dbReference type="GeneID" id="41712006"/>
<dbReference type="KEGG" id="pfu:PF0215"/>
<dbReference type="PATRIC" id="fig|186497.12.peg.223"/>
<dbReference type="eggNOG" id="arCOG01169">
    <property type="taxonomic scope" value="Archaea"/>
</dbReference>
<dbReference type="HOGENOM" id="CLU_031223_2_1_2"/>
<dbReference type="OrthoDB" id="8680at2157"/>
<dbReference type="PhylomeDB" id="Q8U477"/>
<dbReference type="BioCyc" id="MetaCyc:MONOMER-11818"/>
<dbReference type="SABIO-RK" id="Q8U477"/>
<dbReference type="UniPathway" id="UPA00109">
    <property type="reaction ID" value="UER00187"/>
</dbReference>
<dbReference type="Proteomes" id="UP000001013">
    <property type="component" value="Chromosome"/>
</dbReference>
<dbReference type="GO" id="GO:0009986">
    <property type="term" value="C:cell surface"/>
    <property type="evidence" value="ECO:0007669"/>
    <property type="project" value="UniProtKB-SubCell"/>
</dbReference>
<dbReference type="GO" id="GO:0005576">
    <property type="term" value="C:extracellular region"/>
    <property type="evidence" value="ECO:0007669"/>
    <property type="project" value="UniProtKB-SubCell"/>
</dbReference>
<dbReference type="GO" id="GO:0000015">
    <property type="term" value="C:phosphopyruvate hydratase complex"/>
    <property type="evidence" value="ECO:0007669"/>
    <property type="project" value="InterPro"/>
</dbReference>
<dbReference type="GO" id="GO:0000287">
    <property type="term" value="F:magnesium ion binding"/>
    <property type="evidence" value="ECO:0007669"/>
    <property type="project" value="UniProtKB-UniRule"/>
</dbReference>
<dbReference type="GO" id="GO:0004634">
    <property type="term" value="F:phosphopyruvate hydratase activity"/>
    <property type="evidence" value="ECO:0007669"/>
    <property type="project" value="UniProtKB-UniRule"/>
</dbReference>
<dbReference type="GO" id="GO:0006096">
    <property type="term" value="P:glycolytic process"/>
    <property type="evidence" value="ECO:0007669"/>
    <property type="project" value="UniProtKB-UniRule"/>
</dbReference>
<dbReference type="CDD" id="cd03313">
    <property type="entry name" value="enolase"/>
    <property type="match status" value="1"/>
</dbReference>
<dbReference type="FunFam" id="3.30.390.10:FF:000001">
    <property type="entry name" value="Enolase"/>
    <property type="match status" value="1"/>
</dbReference>
<dbReference type="Gene3D" id="3.20.20.120">
    <property type="entry name" value="Enolase-like C-terminal domain"/>
    <property type="match status" value="1"/>
</dbReference>
<dbReference type="Gene3D" id="3.30.390.10">
    <property type="entry name" value="Enolase-like, N-terminal domain"/>
    <property type="match status" value="1"/>
</dbReference>
<dbReference type="HAMAP" id="MF_00318">
    <property type="entry name" value="Enolase"/>
    <property type="match status" value="1"/>
</dbReference>
<dbReference type="InterPro" id="IPR000941">
    <property type="entry name" value="Enolase"/>
</dbReference>
<dbReference type="InterPro" id="IPR036849">
    <property type="entry name" value="Enolase-like_C_sf"/>
</dbReference>
<dbReference type="InterPro" id="IPR029017">
    <property type="entry name" value="Enolase-like_N"/>
</dbReference>
<dbReference type="InterPro" id="IPR020810">
    <property type="entry name" value="Enolase_C"/>
</dbReference>
<dbReference type="InterPro" id="IPR020809">
    <property type="entry name" value="Enolase_CS"/>
</dbReference>
<dbReference type="InterPro" id="IPR020811">
    <property type="entry name" value="Enolase_N"/>
</dbReference>
<dbReference type="NCBIfam" id="TIGR01060">
    <property type="entry name" value="eno"/>
    <property type="match status" value="1"/>
</dbReference>
<dbReference type="PANTHER" id="PTHR11902">
    <property type="entry name" value="ENOLASE"/>
    <property type="match status" value="1"/>
</dbReference>
<dbReference type="PANTHER" id="PTHR11902:SF1">
    <property type="entry name" value="ENOLASE"/>
    <property type="match status" value="1"/>
</dbReference>
<dbReference type="Pfam" id="PF00113">
    <property type="entry name" value="Enolase_C"/>
    <property type="match status" value="1"/>
</dbReference>
<dbReference type="Pfam" id="PF03952">
    <property type="entry name" value="Enolase_N"/>
    <property type="match status" value="1"/>
</dbReference>
<dbReference type="PIRSF" id="PIRSF001400">
    <property type="entry name" value="Enolase"/>
    <property type="match status" value="1"/>
</dbReference>
<dbReference type="PRINTS" id="PR00148">
    <property type="entry name" value="ENOLASE"/>
</dbReference>
<dbReference type="SFLD" id="SFLDS00001">
    <property type="entry name" value="Enolase"/>
    <property type="match status" value="1"/>
</dbReference>
<dbReference type="SFLD" id="SFLDF00002">
    <property type="entry name" value="enolase"/>
    <property type="match status" value="1"/>
</dbReference>
<dbReference type="SMART" id="SM01192">
    <property type="entry name" value="Enolase_C"/>
    <property type="match status" value="1"/>
</dbReference>
<dbReference type="SMART" id="SM01193">
    <property type="entry name" value="Enolase_N"/>
    <property type="match status" value="1"/>
</dbReference>
<dbReference type="SUPFAM" id="SSF51604">
    <property type="entry name" value="Enolase C-terminal domain-like"/>
    <property type="match status" value="1"/>
</dbReference>
<dbReference type="SUPFAM" id="SSF54826">
    <property type="entry name" value="Enolase N-terminal domain-like"/>
    <property type="match status" value="1"/>
</dbReference>
<dbReference type="PROSITE" id="PS00164">
    <property type="entry name" value="ENOLASE"/>
    <property type="match status" value="1"/>
</dbReference>
<evidence type="ECO:0000255" key="1">
    <source>
        <dbReference type="HAMAP-Rule" id="MF_00318"/>
    </source>
</evidence>